<organism>
    <name type="scientific">Vibrio atlanticus (strain LGP32)</name>
    <name type="common">Vibrio splendidus (strain Mel32)</name>
    <dbReference type="NCBI Taxonomy" id="575788"/>
    <lineage>
        <taxon>Bacteria</taxon>
        <taxon>Pseudomonadati</taxon>
        <taxon>Pseudomonadota</taxon>
        <taxon>Gammaproteobacteria</taxon>
        <taxon>Vibrionales</taxon>
        <taxon>Vibrionaceae</taxon>
        <taxon>Vibrio</taxon>
    </lineage>
</organism>
<feature type="chain" id="PRO_1000188287" description="Erythronate-4-phosphate dehydrogenase">
    <location>
        <begin position="1"/>
        <end position="377"/>
    </location>
</feature>
<feature type="active site" evidence="1">
    <location>
        <position position="209"/>
    </location>
</feature>
<feature type="active site" evidence="1">
    <location>
        <position position="238"/>
    </location>
</feature>
<feature type="active site" description="Proton donor" evidence="1">
    <location>
        <position position="255"/>
    </location>
</feature>
<feature type="binding site" evidence="1">
    <location>
        <position position="45"/>
    </location>
    <ligand>
        <name>substrate</name>
    </ligand>
</feature>
<feature type="binding site" evidence="1">
    <location>
        <position position="67"/>
    </location>
    <ligand>
        <name>substrate</name>
    </ligand>
</feature>
<feature type="binding site" evidence="1">
    <location>
        <begin position="127"/>
        <end position="128"/>
    </location>
    <ligand>
        <name>NAD(+)</name>
        <dbReference type="ChEBI" id="CHEBI:57540"/>
    </ligand>
</feature>
<feature type="binding site" evidence="1">
    <location>
        <position position="147"/>
    </location>
    <ligand>
        <name>NAD(+)</name>
        <dbReference type="ChEBI" id="CHEBI:57540"/>
    </ligand>
</feature>
<feature type="binding site" evidence="1">
    <location>
        <position position="176"/>
    </location>
    <ligand>
        <name>NAD(+)</name>
        <dbReference type="ChEBI" id="CHEBI:57540"/>
    </ligand>
</feature>
<feature type="binding site" evidence="1">
    <location>
        <position position="233"/>
    </location>
    <ligand>
        <name>NAD(+)</name>
        <dbReference type="ChEBI" id="CHEBI:57540"/>
    </ligand>
</feature>
<feature type="binding site" evidence="1">
    <location>
        <position position="258"/>
    </location>
    <ligand>
        <name>NAD(+)</name>
        <dbReference type="ChEBI" id="CHEBI:57540"/>
    </ligand>
</feature>
<feature type="binding site" evidence="1">
    <location>
        <position position="259"/>
    </location>
    <ligand>
        <name>substrate</name>
    </ligand>
</feature>
<comment type="function">
    <text evidence="1">Catalyzes the oxidation of erythronate-4-phosphate to 3-hydroxy-2-oxo-4-phosphonooxybutanoate.</text>
</comment>
<comment type="catalytic activity">
    <reaction evidence="1">
        <text>4-phospho-D-erythronate + NAD(+) = (R)-3-hydroxy-2-oxo-4-phosphooxybutanoate + NADH + H(+)</text>
        <dbReference type="Rhea" id="RHEA:18829"/>
        <dbReference type="ChEBI" id="CHEBI:15378"/>
        <dbReference type="ChEBI" id="CHEBI:57540"/>
        <dbReference type="ChEBI" id="CHEBI:57945"/>
        <dbReference type="ChEBI" id="CHEBI:58538"/>
        <dbReference type="ChEBI" id="CHEBI:58766"/>
        <dbReference type="EC" id="1.1.1.290"/>
    </reaction>
</comment>
<comment type="pathway">
    <text evidence="1">Cofactor biosynthesis; pyridoxine 5'-phosphate biosynthesis; pyridoxine 5'-phosphate from D-erythrose 4-phosphate: step 2/5.</text>
</comment>
<comment type="subunit">
    <text evidence="1">Homodimer.</text>
</comment>
<comment type="subcellular location">
    <subcellularLocation>
        <location evidence="1">Cytoplasm</location>
    </subcellularLocation>
</comment>
<comment type="similarity">
    <text evidence="1">Belongs to the D-isomer specific 2-hydroxyacid dehydrogenase family. PdxB subfamily.</text>
</comment>
<name>PDXB_VIBA3</name>
<sequence>MKILIDENMPYAEALFSQLGEVTMKSGRTLTADDLVDVDALMIRSVTKVNESLISKANKLKFVGTATAGMDHVDQELMKERGIFFTAAPGCNKVGVAEYAFSAMMVLAQQQGFSVFEKTVGIIGCGQVGSYLAKCLEGIGIKVLLNDPLKQQEGDTREFTELDTLLEQSDVITLHTPITKTGEFPTHHLINEQVLNNLRADQILINAARGPVVDNQALKARLQKADGFTAVLDVFEFEPEVDFELLPLLAFTTPHVAGYGLEGKARGTTMIFNSYCEFLGTEQRAYASDLLPTAPVPKMKLDRAWDEATLHNLTQLIYDVRKDDALFRRNISTPGSFDKMRKEYWDRREYSAVELTGDESCNLTPLSKLGFMVKPTL</sequence>
<reference key="1">
    <citation type="submission" date="2009-02" db="EMBL/GenBank/DDBJ databases">
        <title>Vibrio splendidus str. LGP32 complete genome.</title>
        <authorList>
            <person name="Mazel D."/>
            <person name="Le Roux F."/>
        </authorList>
    </citation>
    <scope>NUCLEOTIDE SEQUENCE [LARGE SCALE GENOMIC DNA]</scope>
    <source>
        <strain>LGP32</strain>
    </source>
</reference>
<evidence type="ECO:0000255" key="1">
    <source>
        <dbReference type="HAMAP-Rule" id="MF_01825"/>
    </source>
</evidence>
<protein>
    <recommendedName>
        <fullName evidence="1">Erythronate-4-phosphate dehydrogenase</fullName>
        <ecNumber evidence="1">1.1.1.290</ecNumber>
    </recommendedName>
</protein>
<proteinExistence type="inferred from homology"/>
<gene>
    <name evidence="1" type="primary">pdxB</name>
    <name type="ordered locus">VS_0900</name>
</gene>
<accession>B7VL81</accession>
<keyword id="KW-0963">Cytoplasm</keyword>
<keyword id="KW-0520">NAD</keyword>
<keyword id="KW-0560">Oxidoreductase</keyword>
<keyword id="KW-0664">Pyridoxine biosynthesis</keyword>
<dbReference type="EC" id="1.1.1.290" evidence="1"/>
<dbReference type="EMBL" id="FM954972">
    <property type="protein sequence ID" value="CAV17911.1"/>
    <property type="molecule type" value="Genomic_DNA"/>
</dbReference>
<dbReference type="SMR" id="B7VL81"/>
<dbReference type="STRING" id="575788.VS_0900"/>
<dbReference type="KEGG" id="vsp:VS_0900"/>
<dbReference type="PATRIC" id="fig|575788.5.peg.2225"/>
<dbReference type="eggNOG" id="COG0111">
    <property type="taxonomic scope" value="Bacteria"/>
</dbReference>
<dbReference type="HOGENOM" id="CLU_019796_4_0_6"/>
<dbReference type="UniPathway" id="UPA00244">
    <property type="reaction ID" value="UER00310"/>
</dbReference>
<dbReference type="Proteomes" id="UP000009100">
    <property type="component" value="Chromosome 1"/>
</dbReference>
<dbReference type="GO" id="GO:0005829">
    <property type="term" value="C:cytosol"/>
    <property type="evidence" value="ECO:0007669"/>
    <property type="project" value="TreeGrafter"/>
</dbReference>
<dbReference type="GO" id="GO:0033711">
    <property type="term" value="F:4-phosphoerythronate dehydrogenase activity"/>
    <property type="evidence" value="ECO:0007669"/>
    <property type="project" value="UniProtKB-EC"/>
</dbReference>
<dbReference type="GO" id="GO:0030267">
    <property type="term" value="F:glyoxylate reductase (NADPH) activity"/>
    <property type="evidence" value="ECO:0007669"/>
    <property type="project" value="TreeGrafter"/>
</dbReference>
<dbReference type="GO" id="GO:0016618">
    <property type="term" value="F:hydroxypyruvate reductase [NAD(P)H] activity"/>
    <property type="evidence" value="ECO:0007669"/>
    <property type="project" value="TreeGrafter"/>
</dbReference>
<dbReference type="GO" id="GO:0051287">
    <property type="term" value="F:NAD binding"/>
    <property type="evidence" value="ECO:0007669"/>
    <property type="project" value="InterPro"/>
</dbReference>
<dbReference type="GO" id="GO:0046983">
    <property type="term" value="F:protein dimerization activity"/>
    <property type="evidence" value="ECO:0007669"/>
    <property type="project" value="InterPro"/>
</dbReference>
<dbReference type="GO" id="GO:0008615">
    <property type="term" value="P:pyridoxine biosynthetic process"/>
    <property type="evidence" value="ECO:0007669"/>
    <property type="project" value="UniProtKB-UniRule"/>
</dbReference>
<dbReference type="CDD" id="cd12158">
    <property type="entry name" value="ErythrP_dh"/>
    <property type="match status" value="1"/>
</dbReference>
<dbReference type="FunFam" id="3.40.50.720:FF:000093">
    <property type="entry name" value="Erythronate-4-phosphate dehydrogenase"/>
    <property type="match status" value="1"/>
</dbReference>
<dbReference type="Gene3D" id="3.30.1370.170">
    <property type="match status" value="1"/>
</dbReference>
<dbReference type="Gene3D" id="3.40.50.720">
    <property type="entry name" value="NAD(P)-binding Rossmann-like Domain"/>
    <property type="match status" value="2"/>
</dbReference>
<dbReference type="HAMAP" id="MF_01825">
    <property type="entry name" value="PdxB"/>
    <property type="match status" value="1"/>
</dbReference>
<dbReference type="InterPro" id="IPR050223">
    <property type="entry name" value="D-isomer_2-hydroxyacid_DH"/>
</dbReference>
<dbReference type="InterPro" id="IPR006139">
    <property type="entry name" value="D-isomer_2_OHA_DH_cat_dom"/>
</dbReference>
<dbReference type="InterPro" id="IPR029753">
    <property type="entry name" value="D-isomer_DH_CS"/>
</dbReference>
<dbReference type="InterPro" id="IPR006140">
    <property type="entry name" value="D-isomer_DH_NAD-bd"/>
</dbReference>
<dbReference type="InterPro" id="IPR020921">
    <property type="entry name" value="Erythronate-4-P_DHase"/>
</dbReference>
<dbReference type="InterPro" id="IPR024531">
    <property type="entry name" value="Erythronate-4-P_DHase_dimer"/>
</dbReference>
<dbReference type="InterPro" id="IPR036291">
    <property type="entry name" value="NAD(P)-bd_dom_sf"/>
</dbReference>
<dbReference type="InterPro" id="IPR038251">
    <property type="entry name" value="PdxB_dimer_sf"/>
</dbReference>
<dbReference type="PANTHER" id="PTHR10996:SF178">
    <property type="entry name" value="2-HYDROXYACID DEHYDROGENASE YGL185C-RELATED"/>
    <property type="match status" value="1"/>
</dbReference>
<dbReference type="PANTHER" id="PTHR10996">
    <property type="entry name" value="2-HYDROXYACID DEHYDROGENASE-RELATED"/>
    <property type="match status" value="1"/>
</dbReference>
<dbReference type="Pfam" id="PF00389">
    <property type="entry name" value="2-Hacid_dh"/>
    <property type="match status" value="1"/>
</dbReference>
<dbReference type="Pfam" id="PF02826">
    <property type="entry name" value="2-Hacid_dh_C"/>
    <property type="match status" value="1"/>
</dbReference>
<dbReference type="Pfam" id="PF11890">
    <property type="entry name" value="DUF3410"/>
    <property type="match status" value="1"/>
</dbReference>
<dbReference type="SUPFAM" id="SSF52283">
    <property type="entry name" value="Formate/glycerate dehydrogenase catalytic domain-like"/>
    <property type="match status" value="1"/>
</dbReference>
<dbReference type="SUPFAM" id="SSF51735">
    <property type="entry name" value="NAD(P)-binding Rossmann-fold domains"/>
    <property type="match status" value="1"/>
</dbReference>
<dbReference type="PROSITE" id="PS00671">
    <property type="entry name" value="D_2_HYDROXYACID_DH_3"/>
    <property type="match status" value="1"/>
</dbReference>